<dbReference type="EC" id="2.6.1.16" evidence="1"/>
<dbReference type="EMBL" id="AE008691">
    <property type="protein sequence ID" value="AAM25347.1"/>
    <property type="molecule type" value="Genomic_DNA"/>
</dbReference>
<dbReference type="RefSeq" id="WP_011026271.1">
    <property type="nucleotide sequence ID" value="NC_003869.1"/>
</dbReference>
<dbReference type="SMR" id="Q8R841"/>
<dbReference type="STRING" id="273068.TTE2190"/>
<dbReference type="KEGG" id="tte:TTE2190"/>
<dbReference type="eggNOG" id="COG0449">
    <property type="taxonomic scope" value="Bacteria"/>
</dbReference>
<dbReference type="HOGENOM" id="CLU_012520_5_2_9"/>
<dbReference type="OrthoDB" id="106547at2"/>
<dbReference type="Proteomes" id="UP000000555">
    <property type="component" value="Chromosome"/>
</dbReference>
<dbReference type="GO" id="GO:0005829">
    <property type="term" value="C:cytosol"/>
    <property type="evidence" value="ECO:0007669"/>
    <property type="project" value="TreeGrafter"/>
</dbReference>
<dbReference type="GO" id="GO:0097367">
    <property type="term" value="F:carbohydrate derivative binding"/>
    <property type="evidence" value="ECO:0007669"/>
    <property type="project" value="InterPro"/>
</dbReference>
<dbReference type="GO" id="GO:0004360">
    <property type="term" value="F:glutamine-fructose-6-phosphate transaminase (isomerizing) activity"/>
    <property type="evidence" value="ECO:0007669"/>
    <property type="project" value="UniProtKB-UniRule"/>
</dbReference>
<dbReference type="GO" id="GO:0005975">
    <property type="term" value="P:carbohydrate metabolic process"/>
    <property type="evidence" value="ECO:0007669"/>
    <property type="project" value="UniProtKB-UniRule"/>
</dbReference>
<dbReference type="GO" id="GO:0006002">
    <property type="term" value="P:fructose 6-phosphate metabolic process"/>
    <property type="evidence" value="ECO:0007669"/>
    <property type="project" value="TreeGrafter"/>
</dbReference>
<dbReference type="GO" id="GO:0006487">
    <property type="term" value="P:protein N-linked glycosylation"/>
    <property type="evidence" value="ECO:0007669"/>
    <property type="project" value="TreeGrafter"/>
</dbReference>
<dbReference type="GO" id="GO:0006047">
    <property type="term" value="P:UDP-N-acetylglucosamine metabolic process"/>
    <property type="evidence" value="ECO:0007669"/>
    <property type="project" value="TreeGrafter"/>
</dbReference>
<dbReference type="CDD" id="cd00714">
    <property type="entry name" value="GFAT"/>
    <property type="match status" value="1"/>
</dbReference>
<dbReference type="CDD" id="cd05008">
    <property type="entry name" value="SIS_GlmS_GlmD_1"/>
    <property type="match status" value="1"/>
</dbReference>
<dbReference type="CDD" id="cd05009">
    <property type="entry name" value="SIS_GlmS_GlmD_2"/>
    <property type="match status" value="1"/>
</dbReference>
<dbReference type="FunFam" id="3.40.50.10490:FF:000001">
    <property type="entry name" value="Glutamine--fructose-6-phosphate aminotransferase [isomerizing]"/>
    <property type="match status" value="1"/>
</dbReference>
<dbReference type="FunFam" id="3.40.50.10490:FF:000002">
    <property type="entry name" value="Glutamine--fructose-6-phosphate aminotransferase [isomerizing]"/>
    <property type="match status" value="1"/>
</dbReference>
<dbReference type="FunFam" id="3.60.20.10:FF:000006">
    <property type="entry name" value="Glutamine--fructose-6-phosphate aminotransferase [isomerizing]"/>
    <property type="match status" value="1"/>
</dbReference>
<dbReference type="Gene3D" id="3.40.50.10490">
    <property type="entry name" value="Glucose-6-phosphate isomerase like protein, domain 1"/>
    <property type="match status" value="2"/>
</dbReference>
<dbReference type="Gene3D" id="3.60.20.10">
    <property type="entry name" value="Glutamine Phosphoribosylpyrophosphate, subunit 1, domain 1"/>
    <property type="match status" value="1"/>
</dbReference>
<dbReference type="HAMAP" id="MF_00164">
    <property type="entry name" value="GlmS"/>
    <property type="match status" value="1"/>
</dbReference>
<dbReference type="InterPro" id="IPR017932">
    <property type="entry name" value="GATase_2_dom"/>
</dbReference>
<dbReference type="InterPro" id="IPR005855">
    <property type="entry name" value="GFAT"/>
</dbReference>
<dbReference type="InterPro" id="IPR047084">
    <property type="entry name" value="GFAT_N"/>
</dbReference>
<dbReference type="InterPro" id="IPR035466">
    <property type="entry name" value="GlmS/AgaS_SIS"/>
</dbReference>
<dbReference type="InterPro" id="IPR035490">
    <property type="entry name" value="GlmS/FrlB_SIS"/>
</dbReference>
<dbReference type="InterPro" id="IPR029055">
    <property type="entry name" value="Ntn_hydrolases_N"/>
</dbReference>
<dbReference type="InterPro" id="IPR001347">
    <property type="entry name" value="SIS_dom"/>
</dbReference>
<dbReference type="InterPro" id="IPR046348">
    <property type="entry name" value="SIS_dom_sf"/>
</dbReference>
<dbReference type="NCBIfam" id="TIGR01135">
    <property type="entry name" value="glmS"/>
    <property type="match status" value="1"/>
</dbReference>
<dbReference type="NCBIfam" id="NF001484">
    <property type="entry name" value="PRK00331.1"/>
    <property type="match status" value="1"/>
</dbReference>
<dbReference type="PANTHER" id="PTHR10937">
    <property type="entry name" value="GLUCOSAMINE--FRUCTOSE-6-PHOSPHATE AMINOTRANSFERASE, ISOMERIZING"/>
    <property type="match status" value="1"/>
</dbReference>
<dbReference type="PANTHER" id="PTHR10937:SF0">
    <property type="entry name" value="GLUTAMINE--FRUCTOSE-6-PHOSPHATE TRANSAMINASE (ISOMERIZING)"/>
    <property type="match status" value="1"/>
</dbReference>
<dbReference type="Pfam" id="PF13522">
    <property type="entry name" value="GATase_6"/>
    <property type="match status" value="1"/>
</dbReference>
<dbReference type="Pfam" id="PF01380">
    <property type="entry name" value="SIS"/>
    <property type="match status" value="2"/>
</dbReference>
<dbReference type="SUPFAM" id="SSF56235">
    <property type="entry name" value="N-terminal nucleophile aminohydrolases (Ntn hydrolases)"/>
    <property type="match status" value="1"/>
</dbReference>
<dbReference type="SUPFAM" id="SSF53697">
    <property type="entry name" value="SIS domain"/>
    <property type="match status" value="1"/>
</dbReference>
<dbReference type="PROSITE" id="PS51278">
    <property type="entry name" value="GATASE_TYPE_2"/>
    <property type="match status" value="1"/>
</dbReference>
<dbReference type="PROSITE" id="PS51464">
    <property type="entry name" value="SIS"/>
    <property type="match status" value="2"/>
</dbReference>
<proteinExistence type="inferred from homology"/>
<evidence type="ECO:0000255" key="1">
    <source>
        <dbReference type="HAMAP-Rule" id="MF_00164"/>
    </source>
</evidence>
<name>GLMS_CALS4</name>
<accession>Q8R841</accession>
<reference key="1">
    <citation type="journal article" date="2002" name="Genome Res.">
        <title>A complete sequence of the T. tengcongensis genome.</title>
        <authorList>
            <person name="Bao Q."/>
            <person name="Tian Y."/>
            <person name="Li W."/>
            <person name="Xu Z."/>
            <person name="Xuan Z."/>
            <person name="Hu S."/>
            <person name="Dong W."/>
            <person name="Yang J."/>
            <person name="Chen Y."/>
            <person name="Xue Y."/>
            <person name="Xu Y."/>
            <person name="Lai X."/>
            <person name="Huang L."/>
            <person name="Dong X."/>
            <person name="Ma Y."/>
            <person name="Ling L."/>
            <person name="Tan H."/>
            <person name="Chen R."/>
            <person name="Wang J."/>
            <person name="Yu J."/>
            <person name="Yang H."/>
        </authorList>
    </citation>
    <scope>NUCLEOTIDE SEQUENCE [LARGE SCALE GENOMIC DNA]</scope>
    <source>
        <strain>DSM 15242 / JCM 11007 / NBRC 100824 / MB4</strain>
    </source>
</reference>
<protein>
    <recommendedName>
        <fullName evidence="1">Glutamine--fructose-6-phosphate aminotransferase [isomerizing]</fullName>
        <ecNumber evidence="1">2.6.1.16</ecNumber>
    </recommendedName>
    <alternativeName>
        <fullName evidence="1">D-fructose-6-phosphate amidotransferase</fullName>
    </alternativeName>
    <alternativeName>
        <fullName evidence="1">GFAT</fullName>
    </alternativeName>
    <alternativeName>
        <fullName evidence="1">Glucosamine-6-phosphate synthase</fullName>
    </alternativeName>
    <alternativeName>
        <fullName evidence="1">Hexosephosphate aminotransferase</fullName>
    </alternativeName>
    <alternativeName>
        <fullName evidence="1">L-glutamine--D-fructose-6-phosphate amidotransferase</fullName>
    </alternativeName>
</protein>
<comment type="function">
    <text evidence="1">Catalyzes the first step in hexosamine metabolism, converting fructose-6P into glucosamine-6P using glutamine as a nitrogen source.</text>
</comment>
<comment type="catalytic activity">
    <reaction evidence="1">
        <text>D-fructose 6-phosphate + L-glutamine = D-glucosamine 6-phosphate + L-glutamate</text>
        <dbReference type="Rhea" id="RHEA:13237"/>
        <dbReference type="ChEBI" id="CHEBI:29985"/>
        <dbReference type="ChEBI" id="CHEBI:58359"/>
        <dbReference type="ChEBI" id="CHEBI:58725"/>
        <dbReference type="ChEBI" id="CHEBI:61527"/>
        <dbReference type="EC" id="2.6.1.16"/>
    </reaction>
</comment>
<comment type="subunit">
    <text evidence="1">Homodimer.</text>
</comment>
<comment type="subcellular location">
    <subcellularLocation>
        <location evidence="1">Cytoplasm</location>
    </subcellularLocation>
</comment>
<sequence length="608" mass="67445">MCGIVGYIGDKQATPILLEGLTRLEYRGYDSAGIAILHNGNINIKKAKGRLNVLRELVEKDYMEGTIGIGHTRWATHGEPSDTNSHPHLSQSGLIAVVHNGIIENYLPLKKWLIEEGYNFISETDTEVVANLLEYYYNGDIVEALRKVLDRIEGSYALGVLCKDNPDMIVAARKEAPLIVGIGNGENFIASDIPAILKYTRNVYFLDDHEIAIIKKDSVEFIDVFGRKIGKSLFEVKWDVEAAEKGGYEHFMIKEIHEQPAAIKDTLRGRIINDSQIVLDNINITKEDLEKIEKIFIVACGTAYHAGVVGKYVIESFARIPVEVDVASEFRYRNPIVNERILTIVISQSGETADTIAALKEAKRKGSRVIAITNVVGSSVSREADEVLYTWAGPEIAVASTKAYTTQLIALYLIALDFALKKGTMSSTKVVEIISELKKLPDKVQYLLDNKEVIQKFASEHYNVKDVFYIGRGLDYAVAMEGSLKLKEISYIHSEAYPAGELKHGTLALVEEGTLIIALATQDDLFEKMLSNIKEVKARGGYVVAFAKQGNLQLEGVVDKVIYIPDTLKELTPVLTVVPLQLLAYYMAVEKGCDVDKPRNLAKSVTVE</sequence>
<keyword id="KW-0032">Aminotransferase</keyword>
<keyword id="KW-0963">Cytoplasm</keyword>
<keyword id="KW-0315">Glutamine amidotransferase</keyword>
<keyword id="KW-1185">Reference proteome</keyword>
<keyword id="KW-0677">Repeat</keyword>
<keyword id="KW-0808">Transferase</keyword>
<feature type="initiator methionine" description="Removed" evidence="1">
    <location>
        <position position="1"/>
    </location>
</feature>
<feature type="chain" id="PRO_0000135403" description="Glutamine--fructose-6-phosphate aminotransferase [isomerizing]">
    <location>
        <begin position="2"/>
        <end position="608"/>
    </location>
</feature>
<feature type="domain" description="Glutamine amidotransferase type-2" evidence="1">
    <location>
        <begin position="2"/>
        <end position="217"/>
    </location>
</feature>
<feature type="domain" description="SIS 1" evidence="1">
    <location>
        <begin position="285"/>
        <end position="424"/>
    </location>
</feature>
<feature type="domain" description="SIS 2" evidence="1">
    <location>
        <begin position="453"/>
        <end position="598"/>
    </location>
</feature>
<feature type="active site" description="Nucleophile; for GATase activity" evidence="1">
    <location>
        <position position="2"/>
    </location>
</feature>
<feature type="active site" description="For Fru-6P isomerization activity" evidence="1">
    <location>
        <position position="603"/>
    </location>
</feature>
<organism>
    <name type="scientific">Caldanaerobacter subterraneus subsp. tengcongensis (strain DSM 15242 / JCM 11007 / NBRC 100824 / MB4)</name>
    <name type="common">Thermoanaerobacter tengcongensis</name>
    <dbReference type="NCBI Taxonomy" id="273068"/>
    <lineage>
        <taxon>Bacteria</taxon>
        <taxon>Bacillati</taxon>
        <taxon>Bacillota</taxon>
        <taxon>Clostridia</taxon>
        <taxon>Thermoanaerobacterales</taxon>
        <taxon>Thermoanaerobacteraceae</taxon>
        <taxon>Caldanaerobacter</taxon>
    </lineage>
</organism>
<gene>
    <name evidence="1" type="primary">glmS</name>
    <name type="ordered locus">TTE2190</name>
</gene>